<comment type="function">
    <text evidence="1">Member of a network of 50S ribosomal subunit biogenesis factors which assembles along the 30S-50S interface, preventing incorrect 23S rRNA structures from forming. Promotes peptidyl transferase center (PTC) maturation.</text>
</comment>
<comment type="subcellular location">
    <subcellularLocation>
        <location evidence="1">Cytoplasm</location>
    </subcellularLocation>
    <text evidence="1">Associates with late stage pre-50S ribosomal subunits.</text>
</comment>
<comment type="similarity">
    <text evidence="1">Belongs to the DarP family.</text>
</comment>
<accession>Q5R0H4</accession>
<name>DARP_IDILO</name>
<organism>
    <name type="scientific">Idiomarina loihiensis (strain ATCC BAA-735 / DSM 15497 / L2-TR)</name>
    <dbReference type="NCBI Taxonomy" id="283942"/>
    <lineage>
        <taxon>Bacteria</taxon>
        <taxon>Pseudomonadati</taxon>
        <taxon>Pseudomonadota</taxon>
        <taxon>Gammaproteobacteria</taxon>
        <taxon>Alteromonadales</taxon>
        <taxon>Idiomarinaceae</taxon>
        <taxon>Idiomarina</taxon>
    </lineage>
</organism>
<proteinExistence type="inferred from homology"/>
<feature type="chain" id="PRO_0000257630" description="Dual-action ribosomal maturation protein DarP">
    <location>
        <begin position="1"/>
        <end position="171"/>
    </location>
</feature>
<feature type="region of interest" description="Disordered" evidence="2">
    <location>
        <begin position="1"/>
        <end position="30"/>
    </location>
</feature>
<sequence>MPKRPAENPEQSDDFVSKSQKKREMAERQELGTQLVNLTDSQLAKMPLDDELRDAVLLARKIRNKHEGYRRQLQFIGKLMRLRDIAPIEQALNNLKNAHQQQTSIFHEIETTRDKLLHEGDDALQEFIEEHPHADRQKLRQLIRLAEKQRAEQKPPVAARQLFVYLRELLG</sequence>
<evidence type="ECO:0000255" key="1">
    <source>
        <dbReference type="HAMAP-Rule" id="MF_00765"/>
    </source>
</evidence>
<evidence type="ECO:0000256" key="2">
    <source>
        <dbReference type="SAM" id="MobiDB-lite"/>
    </source>
</evidence>
<protein>
    <recommendedName>
        <fullName evidence="1">Dual-action ribosomal maturation protein DarP</fullName>
    </recommendedName>
    <alternativeName>
        <fullName evidence="1">Large ribosomal subunit assembly factor DarP</fullName>
    </alternativeName>
</protein>
<keyword id="KW-0963">Cytoplasm</keyword>
<keyword id="KW-1185">Reference proteome</keyword>
<keyword id="KW-0690">Ribosome biogenesis</keyword>
<keyword id="KW-0694">RNA-binding</keyword>
<keyword id="KW-0699">rRNA-binding</keyword>
<reference key="1">
    <citation type="journal article" date="2004" name="Proc. Natl. Acad. Sci. U.S.A.">
        <title>Genome sequence of the deep-sea gamma-proteobacterium Idiomarina loihiensis reveals amino acid fermentation as a source of carbon and energy.</title>
        <authorList>
            <person name="Hou S."/>
            <person name="Saw J.H."/>
            <person name="Lee K.S."/>
            <person name="Freitas T.A."/>
            <person name="Belisle C."/>
            <person name="Kawarabayasi Y."/>
            <person name="Donachie S.P."/>
            <person name="Pikina A."/>
            <person name="Galperin M.Y."/>
            <person name="Koonin E.V."/>
            <person name="Makarova K.S."/>
            <person name="Omelchenko M.V."/>
            <person name="Sorokin A."/>
            <person name="Wolf Y.I."/>
            <person name="Li Q.X."/>
            <person name="Keum Y.S."/>
            <person name="Campbell S."/>
            <person name="Denery J."/>
            <person name="Aizawa S."/>
            <person name="Shibata S."/>
            <person name="Malahoff A."/>
            <person name="Alam M."/>
        </authorList>
    </citation>
    <scope>NUCLEOTIDE SEQUENCE [LARGE SCALE GENOMIC DNA]</scope>
    <source>
        <strain>ATCC BAA-735 / DSM 15497 / L2-TR</strain>
    </source>
</reference>
<dbReference type="EMBL" id="AE017340">
    <property type="protein sequence ID" value="AAV81232.1"/>
    <property type="molecule type" value="Genomic_DNA"/>
</dbReference>
<dbReference type="SMR" id="Q5R0H4"/>
<dbReference type="STRING" id="283942.IL0389"/>
<dbReference type="GeneID" id="41335541"/>
<dbReference type="KEGG" id="ilo:IL0389"/>
<dbReference type="eggNOG" id="COG3028">
    <property type="taxonomic scope" value="Bacteria"/>
</dbReference>
<dbReference type="HOGENOM" id="CLU_106757_2_0_6"/>
<dbReference type="OrthoDB" id="5293604at2"/>
<dbReference type="Proteomes" id="UP000001171">
    <property type="component" value="Chromosome"/>
</dbReference>
<dbReference type="GO" id="GO:0005829">
    <property type="term" value="C:cytosol"/>
    <property type="evidence" value="ECO:0007669"/>
    <property type="project" value="TreeGrafter"/>
</dbReference>
<dbReference type="GO" id="GO:0043022">
    <property type="term" value="F:ribosome binding"/>
    <property type="evidence" value="ECO:0007669"/>
    <property type="project" value="UniProtKB-UniRule"/>
</dbReference>
<dbReference type="GO" id="GO:0019843">
    <property type="term" value="F:rRNA binding"/>
    <property type="evidence" value="ECO:0007669"/>
    <property type="project" value="UniProtKB-UniRule"/>
</dbReference>
<dbReference type="GO" id="GO:1902626">
    <property type="term" value="P:assembly of large subunit precursor of preribosome"/>
    <property type="evidence" value="ECO:0007669"/>
    <property type="project" value="UniProtKB-UniRule"/>
</dbReference>
<dbReference type="CDD" id="cd16331">
    <property type="entry name" value="YjgA-like"/>
    <property type="match status" value="1"/>
</dbReference>
<dbReference type="Gene3D" id="1.10.60.30">
    <property type="entry name" value="PSPTO4464-like domains"/>
    <property type="match status" value="2"/>
</dbReference>
<dbReference type="HAMAP" id="MF_00765">
    <property type="entry name" value="DarP"/>
    <property type="match status" value="1"/>
</dbReference>
<dbReference type="InterPro" id="IPR006839">
    <property type="entry name" value="DarP"/>
</dbReference>
<dbReference type="InterPro" id="IPR023153">
    <property type="entry name" value="DarP_sf"/>
</dbReference>
<dbReference type="NCBIfam" id="NF003593">
    <property type="entry name" value="PRK05255.1-1"/>
    <property type="match status" value="1"/>
</dbReference>
<dbReference type="PANTHER" id="PTHR38101">
    <property type="entry name" value="UPF0307 PROTEIN YJGA"/>
    <property type="match status" value="1"/>
</dbReference>
<dbReference type="PANTHER" id="PTHR38101:SF1">
    <property type="entry name" value="UPF0307 PROTEIN YJGA"/>
    <property type="match status" value="1"/>
</dbReference>
<dbReference type="Pfam" id="PF04751">
    <property type="entry name" value="DarP"/>
    <property type="match status" value="1"/>
</dbReference>
<dbReference type="PIRSF" id="PIRSF016183">
    <property type="entry name" value="UCP016183"/>
    <property type="match status" value="1"/>
</dbReference>
<dbReference type="SUPFAM" id="SSF158710">
    <property type="entry name" value="PSPTO4464-like"/>
    <property type="match status" value="1"/>
</dbReference>
<gene>
    <name evidence="1" type="primary">darP</name>
    <name type="ordered locus">IL0389</name>
</gene>